<proteinExistence type="inferred from homology"/>
<feature type="chain" id="PRO_0000211615" description="Chromosome partition protein MukF">
    <location>
        <begin position="1"/>
        <end position="445"/>
    </location>
</feature>
<feature type="region of interest" description="Leucine-zipper">
    <location>
        <begin position="213"/>
        <end position="241"/>
    </location>
</feature>
<evidence type="ECO:0000255" key="1">
    <source>
        <dbReference type="HAMAP-Rule" id="MF_01803"/>
    </source>
</evidence>
<sequence>MSETTLNAAEQPIDELVSWVKQHDFSLNLTTERLAFLIAIAVLSNERFDEELGEGELHDAFTIVTRLFEETGEASAFRANNAINELVKQRLISRFTSEMTEGASIYRLSPLAIGITDYYVRHREFSKLRLSIQLSMVAGEMAKAIEAAKQGGTAGHWKKNVYAVLKYSVGEIFDQIDLNQRVMDEQQQSVKQQIADLLNKDWREAINNCESLLSETSNTLKELQDTLQAAGDELQTQILDIQELVYGDEELEFIEETLFGLQMKLDRITSWGQQAIDLWIGYDRHVHKFIRTAIDMDKNRIFSTRLRQSVKDYFDMPWYLTYADAERLSDLRDEALVLRDDEVTGQVPLEVEYEEFQQVNDELAERIGEMLRLHKDNGKPIDLGIVLKDYLAQHPRTHHFDLARIVIDQAVRMGYSESDYQAIQPDWQAINDYGAKVQANVIDRY</sequence>
<protein>
    <recommendedName>
        <fullName evidence="1">Chromosome partition protein MukF</fullName>
    </recommendedName>
</protein>
<reference key="1">
    <citation type="journal article" date="2003" name="Genome Res.">
        <title>Comparative genome analysis of Vibrio vulnificus, a marine pathogen.</title>
        <authorList>
            <person name="Chen C.-Y."/>
            <person name="Wu K.-M."/>
            <person name="Chang Y.-C."/>
            <person name="Chang C.-H."/>
            <person name="Tsai H.-C."/>
            <person name="Liao T.-L."/>
            <person name="Liu Y.-M."/>
            <person name="Chen H.-J."/>
            <person name="Shen A.B.-T."/>
            <person name="Li J.-C."/>
            <person name="Su T.-L."/>
            <person name="Shao C.-P."/>
            <person name="Lee C.-T."/>
            <person name="Hor L.-I."/>
            <person name="Tsai S.-F."/>
        </authorList>
    </citation>
    <scope>NUCLEOTIDE SEQUENCE [LARGE SCALE GENOMIC DNA]</scope>
    <source>
        <strain>YJ016</strain>
    </source>
</reference>
<gene>
    <name evidence="1" type="primary">mukF</name>
    <name type="ordered locus">VV2300</name>
</gene>
<accession>Q7MJ62</accession>
<organism>
    <name type="scientific">Vibrio vulnificus (strain YJ016)</name>
    <dbReference type="NCBI Taxonomy" id="196600"/>
    <lineage>
        <taxon>Bacteria</taxon>
        <taxon>Pseudomonadati</taxon>
        <taxon>Pseudomonadota</taxon>
        <taxon>Gammaproteobacteria</taxon>
        <taxon>Vibrionales</taxon>
        <taxon>Vibrionaceae</taxon>
        <taxon>Vibrio</taxon>
    </lineage>
</organism>
<name>MUKF_VIBVY</name>
<comment type="function">
    <text evidence="1">Involved in chromosome condensation, segregation and cell cycle progression. May participate in facilitating chromosome segregation by condensation DNA from both sides of a centrally located replisome during cell division. Not required for mini-F plasmid partitioning. Probably acts via its interaction with MukB and MukE. Overexpression results in anucleate cells. It has a calcium binding activity.</text>
</comment>
<comment type="subunit">
    <text evidence="1">Interacts, and probably forms a ternary complex, with MukE and MukB via its C-terminal region. The complex formation is stimulated by calcium or magnesium. It is required for an interaction between MukE and MukB.</text>
</comment>
<comment type="subcellular location">
    <subcellularLocation>
        <location evidence="1">Cytoplasm</location>
        <location evidence="1">Nucleoid</location>
    </subcellularLocation>
    <text evidence="1">Restricted to the nucleoid region.</text>
</comment>
<comment type="similarity">
    <text evidence="1">Belongs to the MukF family.</text>
</comment>
<keyword id="KW-0106">Calcium</keyword>
<keyword id="KW-0131">Cell cycle</keyword>
<keyword id="KW-0132">Cell division</keyword>
<keyword id="KW-0159">Chromosome partition</keyword>
<keyword id="KW-0963">Cytoplasm</keyword>
<keyword id="KW-0226">DNA condensation</keyword>
<dbReference type="EMBL" id="BA000037">
    <property type="protein sequence ID" value="BAC95064.1"/>
    <property type="molecule type" value="Genomic_DNA"/>
</dbReference>
<dbReference type="RefSeq" id="WP_011150799.1">
    <property type="nucleotide sequence ID" value="NC_005139.1"/>
</dbReference>
<dbReference type="SMR" id="Q7MJ62"/>
<dbReference type="STRING" id="672.VV93_v1c20120"/>
<dbReference type="GeneID" id="93896338"/>
<dbReference type="KEGG" id="vvy:VV2300"/>
<dbReference type="eggNOG" id="COG3006">
    <property type="taxonomic scope" value="Bacteria"/>
</dbReference>
<dbReference type="HOGENOM" id="CLU_049853_0_0_6"/>
<dbReference type="Proteomes" id="UP000002675">
    <property type="component" value="Chromosome I"/>
</dbReference>
<dbReference type="GO" id="GO:0005737">
    <property type="term" value="C:cytoplasm"/>
    <property type="evidence" value="ECO:0007669"/>
    <property type="project" value="UniProtKB-UniRule"/>
</dbReference>
<dbReference type="GO" id="GO:0009295">
    <property type="term" value="C:nucleoid"/>
    <property type="evidence" value="ECO:0007669"/>
    <property type="project" value="UniProtKB-SubCell"/>
</dbReference>
<dbReference type="GO" id="GO:0005509">
    <property type="term" value="F:calcium ion binding"/>
    <property type="evidence" value="ECO:0007669"/>
    <property type="project" value="UniProtKB-UniRule"/>
</dbReference>
<dbReference type="GO" id="GO:0051301">
    <property type="term" value="P:cell division"/>
    <property type="evidence" value="ECO:0007669"/>
    <property type="project" value="UniProtKB-KW"/>
</dbReference>
<dbReference type="GO" id="GO:0030261">
    <property type="term" value="P:chromosome condensation"/>
    <property type="evidence" value="ECO:0007669"/>
    <property type="project" value="UniProtKB-KW"/>
</dbReference>
<dbReference type="GO" id="GO:0007059">
    <property type="term" value="P:chromosome segregation"/>
    <property type="evidence" value="ECO:0007669"/>
    <property type="project" value="UniProtKB-UniRule"/>
</dbReference>
<dbReference type="GO" id="GO:0006260">
    <property type="term" value="P:DNA replication"/>
    <property type="evidence" value="ECO:0007669"/>
    <property type="project" value="UniProtKB-UniRule"/>
</dbReference>
<dbReference type="CDD" id="cd16337">
    <property type="entry name" value="MukF_C"/>
    <property type="match status" value="1"/>
</dbReference>
<dbReference type="CDD" id="cd16335">
    <property type="entry name" value="MukF_N"/>
    <property type="match status" value="1"/>
</dbReference>
<dbReference type="Gene3D" id="1.20.58.590">
    <property type="entry name" value="Chromosome partition protein MukF, middle domain"/>
    <property type="match status" value="1"/>
</dbReference>
<dbReference type="Gene3D" id="1.10.225.40">
    <property type="entry name" value="MukF, C-terminal domain"/>
    <property type="match status" value="1"/>
</dbReference>
<dbReference type="Gene3D" id="1.10.10.10">
    <property type="entry name" value="Winged helix-like DNA-binding domain superfamily/Winged helix DNA-binding domain"/>
    <property type="match status" value="1"/>
</dbReference>
<dbReference type="HAMAP" id="MF_01803">
    <property type="entry name" value="MukF"/>
    <property type="match status" value="1"/>
</dbReference>
<dbReference type="InterPro" id="IPR005582">
    <property type="entry name" value="Chromosome_partition_MukF"/>
</dbReference>
<dbReference type="InterPro" id="IPR033441">
    <property type="entry name" value="MukF_C"/>
</dbReference>
<dbReference type="InterPro" id="IPR038198">
    <property type="entry name" value="MukF_C_sf"/>
</dbReference>
<dbReference type="InterPro" id="IPR033440">
    <property type="entry name" value="MukF_M"/>
</dbReference>
<dbReference type="InterPro" id="IPR036141">
    <property type="entry name" value="MukF_M_sp"/>
</dbReference>
<dbReference type="InterPro" id="IPR033439">
    <property type="entry name" value="MukF_WHTH"/>
</dbReference>
<dbReference type="InterPro" id="IPR036388">
    <property type="entry name" value="WH-like_DNA-bd_sf"/>
</dbReference>
<dbReference type="InterPro" id="IPR036390">
    <property type="entry name" value="WH_DNA-bd_sf"/>
</dbReference>
<dbReference type="NCBIfam" id="NF003615">
    <property type="entry name" value="PRK05260.1"/>
    <property type="match status" value="1"/>
</dbReference>
<dbReference type="Pfam" id="PF03882">
    <property type="entry name" value="KicB"/>
    <property type="match status" value="1"/>
</dbReference>
<dbReference type="Pfam" id="PF17193">
    <property type="entry name" value="MukF_C"/>
    <property type="match status" value="1"/>
</dbReference>
<dbReference type="Pfam" id="PF17192">
    <property type="entry name" value="MukF_M"/>
    <property type="match status" value="1"/>
</dbReference>
<dbReference type="PIRSF" id="PIRSF018282">
    <property type="entry name" value="MukF"/>
    <property type="match status" value="1"/>
</dbReference>
<dbReference type="SUPFAM" id="SSF140570">
    <property type="entry name" value="MukF C-terminal domain-like"/>
    <property type="match status" value="1"/>
</dbReference>
<dbReference type="SUPFAM" id="SSF46785">
    <property type="entry name" value="Winged helix' DNA-binding domain"/>
    <property type="match status" value="1"/>
</dbReference>